<reference key="1">
    <citation type="submission" date="2008-04" db="EMBL/GenBank/DDBJ databases">
        <title>NISC comparative sequencing initiative.</title>
        <authorList>
            <person name="Antonellis A."/>
            <person name="Benjamin B."/>
            <person name="Blakesley R.W."/>
            <person name="Bouffard G.G."/>
            <person name="Brinkley C."/>
            <person name="Brooks S."/>
            <person name="Chu G."/>
            <person name="Chub I."/>
            <person name="Coleman H."/>
            <person name="Fuksenko T."/>
            <person name="Gestole M."/>
            <person name="Gregory M."/>
            <person name="Guan X."/>
            <person name="Gupta J."/>
            <person name="Gurson N."/>
            <person name="Han E."/>
            <person name="Han J."/>
            <person name="Hansen N."/>
            <person name="Hargrove A."/>
            <person name="Hines-Harris K."/>
            <person name="Ho S.-L."/>
            <person name="Hu P."/>
            <person name="Hunter G."/>
            <person name="Hurle B."/>
            <person name="Idol J.R."/>
            <person name="Johnson T."/>
            <person name="Knight E."/>
            <person name="Kwong P."/>
            <person name="Lee-Lin S.-Q."/>
            <person name="Legaspi R."/>
            <person name="Madden M."/>
            <person name="Maduro Q.L."/>
            <person name="Maduro V.B."/>
            <person name="Margulies E.H."/>
            <person name="Masiello C."/>
            <person name="Maskeri B."/>
            <person name="McDowell J."/>
            <person name="Merkulov G."/>
            <person name="Montemayor C."/>
            <person name="Mullikin J.C."/>
            <person name="Park M."/>
            <person name="Prasad A."/>
            <person name="Ramsahoye C."/>
            <person name="Reddix-Dugue N."/>
            <person name="Riebow N."/>
            <person name="Schandler K."/>
            <person name="Schueler M.G."/>
            <person name="Sison C."/>
            <person name="Smith L."/>
            <person name="Stantripop S."/>
            <person name="Thomas J.W."/>
            <person name="Thomas P.J."/>
            <person name="Tsipouri V."/>
            <person name="Young A."/>
            <person name="Green E.D."/>
        </authorList>
    </citation>
    <scope>NUCLEOTIDE SEQUENCE [LARGE SCALE GENOMIC DNA]</scope>
</reference>
<dbReference type="EMBL" id="DP000681">
    <property type="protein sequence ID" value="ACB73278.1"/>
    <property type="molecule type" value="Genomic_DNA"/>
</dbReference>
<dbReference type="RefSeq" id="XP_032991330.1">
    <property type="nucleotide sequence ID" value="XM_033135439.1"/>
</dbReference>
<dbReference type="SMR" id="B2B9A1"/>
<dbReference type="FunCoup" id="B2B9A1">
    <property type="interactions" value="1807"/>
</dbReference>
<dbReference type="Ensembl" id="ENSRFET00010003215.1">
    <property type="protein sequence ID" value="ENSRFEP00010002924.1"/>
    <property type="gene ID" value="ENSRFEG00010002083.1"/>
</dbReference>
<dbReference type="GeneID" id="117038469"/>
<dbReference type="GeneTree" id="ENSGT00390000015060"/>
<dbReference type="InParanoid" id="B2B9A1"/>
<dbReference type="OMA" id="MVDNIQD"/>
<dbReference type="OrthoDB" id="1262810at2759"/>
<dbReference type="Proteomes" id="UP000472240">
    <property type="component" value="Chromosome 2"/>
</dbReference>
<dbReference type="GO" id="GO:0005743">
    <property type="term" value="C:mitochondrial inner membrane"/>
    <property type="evidence" value="ECO:0007669"/>
    <property type="project" value="UniProtKB-SubCell"/>
</dbReference>
<dbReference type="GO" id="GO:0045259">
    <property type="term" value="C:proton-transporting ATP synthase complex"/>
    <property type="evidence" value="ECO:0000250"/>
    <property type="project" value="UniProtKB"/>
</dbReference>
<dbReference type="GO" id="GO:0046933">
    <property type="term" value="F:proton-transporting ATP synthase activity, rotational mechanism"/>
    <property type="evidence" value="ECO:0007669"/>
    <property type="project" value="InterPro"/>
</dbReference>
<dbReference type="FunFam" id="1.10.520.20:FF:000002">
    <property type="entry name" value="ATP synthase subunit O, mitochondrial"/>
    <property type="match status" value="1"/>
</dbReference>
<dbReference type="Gene3D" id="1.10.520.20">
    <property type="entry name" value="N-terminal domain of the delta subunit of the F1F0-ATP synthase"/>
    <property type="match status" value="1"/>
</dbReference>
<dbReference type="HAMAP" id="MF_01416">
    <property type="entry name" value="ATP_synth_delta_bact"/>
    <property type="match status" value="1"/>
</dbReference>
<dbReference type="InterPro" id="IPR026015">
    <property type="entry name" value="ATP_synth_OSCP/delta_N_sf"/>
</dbReference>
<dbReference type="InterPro" id="IPR020781">
    <property type="entry name" value="ATPase_OSCP/d_CS"/>
</dbReference>
<dbReference type="InterPro" id="IPR000711">
    <property type="entry name" value="ATPase_OSCP/dsu"/>
</dbReference>
<dbReference type="NCBIfam" id="TIGR01145">
    <property type="entry name" value="ATP_synt_delta"/>
    <property type="match status" value="1"/>
</dbReference>
<dbReference type="PANTHER" id="PTHR11910">
    <property type="entry name" value="ATP SYNTHASE DELTA CHAIN"/>
    <property type="match status" value="1"/>
</dbReference>
<dbReference type="Pfam" id="PF00213">
    <property type="entry name" value="OSCP"/>
    <property type="match status" value="1"/>
</dbReference>
<dbReference type="PRINTS" id="PR00125">
    <property type="entry name" value="ATPASEDELTA"/>
</dbReference>
<dbReference type="SUPFAM" id="SSF47928">
    <property type="entry name" value="N-terminal domain of the delta subunit of the F1F0-ATP synthase"/>
    <property type="match status" value="1"/>
</dbReference>
<dbReference type="PROSITE" id="PS00389">
    <property type="entry name" value="ATPASE_DELTA"/>
    <property type="match status" value="1"/>
</dbReference>
<proteinExistence type="inferred from homology"/>
<comment type="function">
    <text evidence="2 3 4">Subunit OSCP, of the mitochondrial membrane ATP synthase complex (F(1)F(0) ATP synthase or Complex V) that produces ATP from ADP in the presence of a proton gradient across the membrane which is generated by electron transport complexes of the respiratory chain. ATP synthase complex consist of a soluble F(1) head domain - the catalytic core - and a membrane F(1) domain - the membrane proton channel. These two domains are linked by a central stalk rotating inside the F(1) region and a stationary peripheral stalk. During catalysis, ATP synthesis in the catalytic domain of F(1) is coupled via a rotary mechanism of the central stalk subunits to proton translocation (By similarity). In vivo, can only synthesize ATP although its ATP hydrolase activity can be activated artificially in vitro (By similarity). Part of the complex F(0) domain (By similarity). Part of the complex F(0) domain and the peripheric stalk, which acts as a stator to hold the catalytic alpha(3)beta(3) subcomplex and subunit a/ATP6 static relative to the rotary elements (By similarity).</text>
</comment>
<comment type="subunit">
    <text evidence="4">Component of the ATP synthase complex composed at least of ATP5F1A/subunit alpha, ATP5F1B/subunit beta, ATP5MC1/subunit c (homooctomer), MT-ATP6/subunit a, MT-ATP8/subunit 8, ATP5ME/subunit e, ATP5MF/subunit f, ATP5MG/subunit g, ATP5MK/subunit k, ATP5MJ/subunit j, ATP5F1C/subunit gamma, ATP5F1D/subunit delta, ATP5F1E/subunit epsilon, ATP5PF/subunit F6, ATP5PB/subunit b, ATP5PD/subunit d, ATP5PO/subunit OSCP. ATP synthase complex consists of a soluble F(1) head domain (subunits alpha(3) and beta(3)) - the catalytic core - and a membrane F(0) domain - the membrane proton channel (subunits c, a, 8, e, f, g, k and j). These two domains are linked by a central stalk (subunits gamma, delta, and epsilon) rotating inside the F1 region and a stationary peripheral stalk (subunits F6, b, d, and OSCP).</text>
</comment>
<comment type="subcellular location">
    <subcellularLocation>
        <location evidence="1">Mitochondrion</location>
    </subcellularLocation>
    <subcellularLocation>
        <location evidence="1">Mitochondrion inner membrane</location>
    </subcellularLocation>
</comment>
<comment type="PTM">
    <text evidence="4">In response to mitochondrial stress, the precursor protein is ubiquitinated by the SIFI complex in the cytoplasm before mitochondrial import, leading to its degradation. Within the SIFI complex, UBR4 initiates ubiquitin chain that are further elongated or branched by KCMF1.</text>
</comment>
<comment type="similarity">
    <text evidence="6">Belongs to the ATPase delta chain family.</text>
</comment>
<feature type="transit peptide" description="Mitochondrion" evidence="1">
    <location>
        <begin position="1"/>
        <end position="23"/>
    </location>
</feature>
<feature type="chain" id="PRO_0000350577" description="ATP synthase peripheral stalk subunit OSCP, mitochondrial">
    <location>
        <begin position="24"/>
        <end position="213"/>
    </location>
</feature>
<feature type="short sequence motif" description="SIFI-degron" evidence="4">
    <location>
        <begin position="5"/>
        <end position="23"/>
    </location>
</feature>
<feature type="modified residue" description="N6-acetyllysine" evidence="5">
    <location>
        <position position="54"/>
    </location>
</feature>
<feature type="modified residue" description="N6-acetyllysine" evidence="5">
    <location>
        <position position="60"/>
    </location>
</feature>
<feature type="modified residue" description="N6-acetyllysine" evidence="5">
    <location>
        <position position="70"/>
    </location>
</feature>
<feature type="modified residue" description="N6-acetyllysine" evidence="5">
    <location>
        <position position="73"/>
    </location>
</feature>
<feature type="modified residue" description="N6-succinyllysine" evidence="5">
    <location>
        <position position="90"/>
    </location>
</feature>
<feature type="modified residue" description="N6-acetyllysine; alternate" evidence="5">
    <location>
        <position position="100"/>
    </location>
</feature>
<feature type="modified residue" description="N6-succinyllysine; alternate" evidence="5">
    <location>
        <position position="100"/>
    </location>
</feature>
<feature type="modified residue" description="N6-acetyllysine; alternate" evidence="5">
    <location>
        <position position="158"/>
    </location>
</feature>
<feature type="modified residue" description="N6-succinyllysine; alternate" evidence="5">
    <location>
        <position position="158"/>
    </location>
</feature>
<feature type="modified residue" description="N6-acetyllysine" evidence="4">
    <location>
        <position position="172"/>
    </location>
</feature>
<feature type="modified residue" description="N6-acetyllysine" evidence="5">
    <location>
        <position position="176"/>
    </location>
</feature>
<feature type="modified residue" description="N6-acetyllysine" evidence="4">
    <location>
        <position position="192"/>
    </location>
</feature>
<feature type="modified residue" description="N6-succinyllysine" evidence="5">
    <location>
        <position position="199"/>
    </location>
</feature>
<name>ATPO_RHIFE</name>
<protein>
    <recommendedName>
        <fullName evidence="4">ATP synthase peripheral stalk subunit OSCP, mitochondrial</fullName>
    </recommendedName>
    <alternativeName>
        <fullName evidence="6">ATP synthase subunit O</fullName>
    </alternativeName>
    <alternativeName>
        <fullName>Oligomycin sensitivity conferral protein</fullName>
        <shortName>OSCP</shortName>
    </alternativeName>
</protein>
<keyword id="KW-0007">Acetylation</keyword>
<keyword id="KW-0066">ATP synthesis</keyword>
<keyword id="KW-0375">Hydrogen ion transport</keyword>
<keyword id="KW-0406">Ion transport</keyword>
<keyword id="KW-0472">Membrane</keyword>
<keyword id="KW-0496">Mitochondrion</keyword>
<keyword id="KW-0999">Mitochondrion inner membrane</keyword>
<keyword id="KW-1185">Reference proteome</keyword>
<keyword id="KW-0809">Transit peptide</keyword>
<keyword id="KW-0813">Transport</keyword>
<keyword id="KW-0832">Ubl conjugation</keyword>
<evidence type="ECO:0000250" key="1"/>
<evidence type="ECO:0000250" key="2">
    <source>
        <dbReference type="UniProtKB" id="P13621"/>
    </source>
</evidence>
<evidence type="ECO:0000250" key="3">
    <source>
        <dbReference type="UniProtKB" id="P19483"/>
    </source>
</evidence>
<evidence type="ECO:0000250" key="4">
    <source>
        <dbReference type="UniProtKB" id="P48047"/>
    </source>
</evidence>
<evidence type="ECO:0000250" key="5">
    <source>
        <dbReference type="UniProtKB" id="Q9DB20"/>
    </source>
</evidence>
<evidence type="ECO:0000305" key="6"/>
<accession>B2B9A1</accession>
<sequence length="213" mass="23631">MAAPAVSGFSRQVRCFSTSVVRPFTKLVRPPVQIYGIEGRYATALYSAASKQNKLEQVEKELLRVAQLLKEPKMAASIMNPYIKRSIKVKSLNDMTTKEKFSPLTSNLMNLLAENGRLNNTPGVISAFSTIMSVHRGEVPCSVTTASPLDEATLSELKTVLQSFLSKNQILKLEVKTDPSIMGGMIIRIGEKYVDMSAKTKIQKLSRVMREVF</sequence>
<gene>
    <name evidence="4" type="primary">ATP5PO</name>
    <name type="synonym">ATP5O</name>
</gene>
<organism>
    <name type="scientific">Rhinolophus ferrumequinum</name>
    <name type="common">Greater horseshoe bat</name>
    <dbReference type="NCBI Taxonomy" id="59479"/>
    <lineage>
        <taxon>Eukaryota</taxon>
        <taxon>Metazoa</taxon>
        <taxon>Chordata</taxon>
        <taxon>Craniata</taxon>
        <taxon>Vertebrata</taxon>
        <taxon>Euteleostomi</taxon>
        <taxon>Mammalia</taxon>
        <taxon>Eutheria</taxon>
        <taxon>Laurasiatheria</taxon>
        <taxon>Chiroptera</taxon>
        <taxon>Yinpterochiroptera</taxon>
        <taxon>Rhinolophoidea</taxon>
        <taxon>Rhinolophidae</taxon>
        <taxon>Rhinolophinae</taxon>
        <taxon>Rhinolophus</taxon>
    </lineage>
</organism>